<feature type="chain" id="PRO_0000427744" description="Uncharacterized protein MT2059">
    <location>
        <begin position="1"/>
        <end position="285"/>
    </location>
</feature>
<sequence length="285" mass="31049">MVKRSRATRLSPSIWSGWESPQCRSIRARLLLPRGRSRPPNADCCWNQLAVTPDTRMPASSAAGRDAAAYDAWYDSPTGRPILATEVAALRPLIEVFAQPRLEIGVGTGRFADLLGVRFGLDPSRDALMFARRRGVLVANAVGEAVPFVSRHFGAVLMAFTLCFVTDPAAIFRETRRLLADGGGLVIGFLPRGTPWADLYALRAARGQPGYRDARFYTAAELEQLLADSGFRVIARRCTLHQPPGLARYDIEAAHDGIQAGAGFVAISAVDQAHEPKDDHPLESE</sequence>
<comment type="induction">
    <text evidence="1">A member of the dormancy regulon. Induced in response to reduced oxygen tension (hypoxia) and low levels of nitric oxide (NO).</text>
</comment>
<comment type="similarity">
    <text evidence="2">Belongs to the methyltransferase superfamily.</text>
</comment>
<evidence type="ECO:0000269" key="1">
    <source>
    </source>
</evidence>
<evidence type="ECO:0000305" key="2"/>
<gene>
    <name type="ordered locus">MT2059</name>
</gene>
<name>Y2003_MYCTO</name>
<organism>
    <name type="scientific">Mycobacterium tuberculosis (strain CDC 1551 / Oshkosh)</name>
    <dbReference type="NCBI Taxonomy" id="83331"/>
    <lineage>
        <taxon>Bacteria</taxon>
        <taxon>Bacillati</taxon>
        <taxon>Actinomycetota</taxon>
        <taxon>Actinomycetes</taxon>
        <taxon>Mycobacteriales</taxon>
        <taxon>Mycobacteriaceae</taxon>
        <taxon>Mycobacterium</taxon>
        <taxon>Mycobacterium tuberculosis complex</taxon>
    </lineage>
</organism>
<accession>P9WJZ4</accession>
<accession>L0TB26</accession>
<accession>P64919</accession>
<accession>Q10853</accession>
<protein>
    <recommendedName>
        <fullName>Uncharacterized protein MT2059</fullName>
    </recommendedName>
</protein>
<keyword id="KW-1185">Reference proteome</keyword>
<dbReference type="EMBL" id="AE000516">
    <property type="protein sequence ID" value="AAK46336.1"/>
    <property type="molecule type" value="Genomic_DNA"/>
</dbReference>
<dbReference type="PIR" id="A70759">
    <property type="entry name" value="A70759"/>
</dbReference>
<dbReference type="SMR" id="P9WJZ4"/>
<dbReference type="KEGG" id="mtc:MT2059"/>
<dbReference type="PATRIC" id="fig|83331.31.peg.2216"/>
<dbReference type="HOGENOM" id="CLU_037990_14_1_11"/>
<dbReference type="Proteomes" id="UP000001020">
    <property type="component" value="Chromosome"/>
</dbReference>
<dbReference type="GO" id="GO:0008757">
    <property type="term" value="F:S-adenosylmethionine-dependent methyltransferase activity"/>
    <property type="evidence" value="ECO:0007669"/>
    <property type="project" value="InterPro"/>
</dbReference>
<dbReference type="CDD" id="cd02440">
    <property type="entry name" value="AdoMet_MTases"/>
    <property type="match status" value="1"/>
</dbReference>
<dbReference type="Gene3D" id="3.40.50.150">
    <property type="entry name" value="Vaccinia Virus protein VP39"/>
    <property type="match status" value="1"/>
</dbReference>
<dbReference type="InterPro" id="IPR013216">
    <property type="entry name" value="Methyltransf_11"/>
</dbReference>
<dbReference type="InterPro" id="IPR029063">
    <property type="entry name" value="SAM-dependent_MTases_sf"/>
</dbReference>
<dbReference type="Pfam" id="PF08241">
    <property type="entry name" value="Methyltransf_11"/>
    <property type="match status" value="1"/>
</dbReference>
<dbReference type="SUPFAM" id="SSF53335">
    <property type="entry name" value="S-adenosyl-L-methionine-dependent methyltransferases"/>
    <property type="match status" value="1"/>
</dbReference>
<reference key="1">
    <citation type="journal article" date="2002" name="J. Bacteriol.">
        <title>Whole-genome comparison of Mycobacterium tuberculosis clinical and laboratory strains.</title>
        <authorList>
            <person name="Fleischmann R.D."/>
            <person name="Alland D."/>
            <person name="Eisen J.A."/>
            <person name="Carpenter L."/>
            <person name="White O."/>
            <person name="Peterson J.D."/>
            <person name="DeBoy R.T."/>
            <person name="Dodson R.J."/>
            <person name="Gwinn M.L."/>
            <person name="Haft D.H."/>
            <person name="Hickey E.K."/>
            <person name="Kolonay J.F."/>
            <person name="Nelson W.C."/>
            <person name="Umayam L.A."/>
            <person name="Ermolaeva M.D."/>
            <person name="Salzberg S.L."/>
            <person name="Delcher A."/>
            <person name="Utterback T.R."/>
            <person name="Weidman J.F."/>
            <person name="Khouri H.M."/>
            <person name="Gill J."/>
            <person name="Mikula A."/>
            <person name="Bishai W."/>
            <person name="Jacobs W.R. Jr."/>
            <person name="Venter J.C."/>
            <person name="Fraser C.M."/>
        </authorList>
    </citation>
    <scope>NUCLEOTIDE SEQUENCE [LARGE SCALE GENOMIC DNA]</scope>
    <source>
        <strain>CDC 1551 / Oshkosh</strain>
    </source>
</reference>
<reference key="2">
    <citation type="journal article" date="2003" name="J. Exp. Med.">
        <title>Inhibition of respiration by nitric oxide induces a Mycobacterium tuberculosis dormancy program.</title>
        <authorList>
            <person name="Voskuil M.I."/>
            <person name="Schnappinger D."/>
            <person name="Visconti K.C."/>
            <person name="Harrell M.I."/>
            <person name="Dolganov G.M."/>
            <person name="Sherman D.R."/>
            <person name="Schoolnik G.K."/>
        </authorList>
    </citation>
    <scope>INDUCTION BY NITRIC OXIDE (NO) AND BY HYPOXIA</scope>
    <scope>DORMANCY REGULON</scope>
    <source>
        <strain>CDC 1551 / Oshkosh</strain>
    </source>
</reference>
<proteinExistence type="evidence at transcript level"/>